<comment type="catalytic activity">
    <reaction evidence="1">
        <text>L-citrulline + L-aspartate + ATP = 2-(N(omega)-L-arginino)succinate + AMP + diphosphate + H(+)</text>
        <dbReference type="Rhea" id="RHEA:10932"/>
        <dbReference type="ChEBI" id="CHEBI:15378"/>
        <dbReference type="ChEBI" id="CHEBI:29991"/>
        <dbReference type="ChEBI" id="CHEBI:30616"/>
        <dbReference type="ChEBI" id="CHEBI:33019"/>
        <dbReference type="ChEBI" id="CHEBI:57472"/>
        <dbReference type="ChEBI" id="CHEBI:57743"/>
        <dbReference type="ChEBI" id="CHEBI:456215"/>
        <dbReference type="EC" id="6.3.4.5"/>
    </reaction>
</comment>
<comment type="pathway">
    <text evidence="1">Amino-acid biosynthesis; L-arginine biosynthesis; L-arginine from L-ornithine and carbamoyl phosphate: step 2/3.</text>
</comment>
<comment type="subunit">
    <text evidence="1">Homotetramer.</text>
</comment>
<comment type="subcellular location">
    <subcellularLocation>
        <location evidence="1">Cytoplasm</location>
    </subcellularLocation>
</comment>
<comment type="similarity">
    <text evidence="1">Belongs to the argininosuccinate synthase family. Type 1 subfamily.</text>
</comment>
<organism>
    <name type="scientific">Bacillus pumilus (strain SAFR-032)</name>
    <dbReference type="NCBI Taxonomy" id="315750"/>
    <lineage>
        <taxon>Bacteria</taxon>
        <taxon>Bacillati</taxon>
        <taxon>Bacillota</taxon>
        <taxon>Bacilli</taxon>
        <taxon>Bacillales</taxon>
        <taxon>Bacillaceae</taxon>
        <taxon>Bacillus</taxon>
    </lineage>
</organism>
<gene>
    <name evidence="1" type="primary">argG</name>
    <name type="ordered locus">BPUM_2577</name>
</gene>
<proteinExistence type="inferred from homology"/>
<name>ASSY_BACP2</name>
<reference key="1">
    <citation type="journal article" date="2007" name="PLoS ONE">
        <title>Paradoxical DNA repair and peroxide resistance gene conservation in Bacillus pumilus SAFR-032.</title>
        <authorList>
            <person name="Gioia J."/>
            <person name="Yerrapragada S."/>
            <person name="Qin X."/>
            <person name="Jiang H."/>
            <person name="Igboeli O.C."/>
            <person name="Muzny D."/>
            <person name="Dugan-Rocha S."/>
            <person name="Ding Y."/>
            <person name="Hawes A."/>
            <person name="Liu W."/>
            <person name="Perez L."/>
            <person name="Kovar C."/>
            <person name="Dinh H."/>
            <person name="Lee S."/>
            <person name="Nazareth L."/>
            <person name="Blyth P."/>
            <person name="Holder M."/>
            <person name="Buhay C."/>
            <person name="Tirumalai M.R."/>
            <person name="Liu Y."/>
            <person name="Dasgupta I."/>
            <person name="Bokhetache L."/>
            <person name="Fujita M."/>
            <person name="Karouia F."/>
            <person name="Eswara Moorthy P."/>
            <person name="Siefert J."/>
            <person name="Uzman A."/>
            <person name="Buzumbo P."/>
            <person name="Verma A."/>
            <person name="Zwiya H."/>
            <person name="McWilliams B.D."/>
            <person name="Olowu A."/>
            <person name="Clinkenbeard K.D."/>
            <person name="Newcombe D."/>
            <person name="Golebiewski L."/>
            <person name="Petrosino J.F."/>
            <person name="Nicholson W.L."/>
            <person name="Fox G.E."/>
            <person name="Venkateswaran K."/>
            <person name="Highlander S.K."/>
            <person name="Weinstock G.M."/>
        </authorList>
    </citation>
    <scope>NUCLEOTIDE SEQUENCE [LARGE SCALE GENOMIC DNA]</scope>
    <source>
        <strain>SAFR-032</strain>
    </source>
</reference>
<feature type="chain" id="PRO_1000057037" description="Argininosuccinate synthase">
    <location>
        <begin position="1"/>
        <end position="403"/>
    </location>
</feature>
<feature type="binding site" evidence="1">
    <location>
        <begin position="10"/>
        <end position="18"/>
    </location>
    <ligand>
        <name>ATP</name>
        <dbReference type="ChEBI" id="CHEBI:30616"/>
    </ligand>
</feature>
<feature type="binding site" evidence="1">
    <location>
        <position position="87"/>
    </location>
    <ligand>
        <name>L-citrulline</name>
        <dbReference type="ChEBI" id="CHEBI:57743"/>
    </ligand>
</feature>
<feature type="binding site" evidence="1">
    <location>
        <position position="117"/>
    </location>
    <ligand>
        <name>ATP</name>
        <dbReference type="ChEBI" id="CHEBI:30616"/>
    </ligand>
</feature>
<feature type="binding site" evidence="1">
    <location>
        <position position="119"/>
    </location>
    <ligand>
        <name>L-aspartate</name>
        <dbReference type="ChEBI" id="CHEBI:29991"/>
    </ligand>
</feature>
<feature type="binding site" evidence="1">
    <location>
        <position position="123"/>
    </location>
    <ligand>
        <name>L-aspartate</name>
        <dbReference type="ChEBI" id="CHEBI:29991"/>
    </ligand>
</feature>
<feature type="binding site" evidence="1">
    <location>
        <position position="123"/>
    </location>
    <ligand>
        <name>L-citrulline</name>
        <dbReference type="ChEBI" id="CHEBI:57743"/>
    </ligand>
</feature>
<feature type="binding site" evidence="1">
    <location>
        <position position="124"/>
    </location>
    <ligand>
        <name>L-aspartate</name>
        <dbReference type="ChEBI" id="CHEBI:29991"/>
    </ligand>
</feature>
<feature type="binding site" evidence="1">
    <location>
        <position position="127"/>
    </location>
    <ligand>
        <name>L-citrulline</name>
        <dbReference type="ChEBI" id="CHEBI:57743"/>
    </ligand>
</feature>
<feature type="binding site" evidence="1">
    <location>
        <position position="175"/>
    </location>
    <ligand>
        <name>L-citrulline</name>
        <dbReference type="ChEBI" id="CHEBI:57743"/>
    </ligand>
</feature>
<feature type="binding site" evidence="1">
    <location>
        <position position="184"/>
    </location>
    <ligand>
        <name>L-citrulline</name>
        <dbReference type="ChEBI" id="CHEBI:57743"/>
    </ligand>
</feature>
<feature type="binding site" evidence="1">
    <location>
        <position position="260"/>
    </location>
    <ligand>
        <name>L-citrulline</name>
        <dbReference type="ChEBI" id="CHEBI:57743"/>
    </ligand>
</feature>
<feature type="binding site" evidence="1">
    <location>
        <position position="272"/>
    </location>
    <ligand>
        <name>L-citrulline</name>
        <dbReference type="ChEBI" id="CHEBI:57743"/>
    </ligand>
</feature>
<dbReference type="EC" id="6.3.4.5" evidence="1"/>
<dbReference type="EMBL" id="CP000813">
    <property type="protein sequence ID" value="ABV63237.1"/>
    <property type="molecule type" value="Genomic_DNA"/>
</dbReference>
<dbReference type="RefSeq" id="WP_003216486.1">
    <property type="nucleotide sequence ID" value="NZ_VEHA01000003.1"/>
</dbReference>
<dbReference type="SMR" id="A8FG70"/>
<dbReference type="STRING" id="315750.BPUM_2577"/>
<dbReference type="GeneID" id="5621842"/>
<dbReference type="KEGG" id="bpu:BPUM_2577"/>
<dbReference type="eggNOG" id="COG0137">
    <property type="taxonomic scope" value="Bacteria"/>
</dbReference>
<dbReference type="HOGENOM" id="CLU_032784_4_2_9"/>
<dbReference type="OrthoDB" id="9801641at2"/>
<dbReference type="UniPathway" id="UPA00068">
    <property type="reaction ID" value="UER00113"/>
</dbReference>
<dbReference type="Proteomes" id="UP000001355">
    <property type="component" value="Chromosome"/>
</dbReference>
<dbReference type="GO" id="GO:0005737">
    <property type="term" value="C:cytoplasm"/>
    <property type="evidence" value="ECO:0007669"/>
    <property type="project" value="UniProtKB-SubCell"/>
</dbReference>
<dbReference type="GO" id="GO:0004055">
    <property type="term" value="F:argininosuccinate synthase activity"/>
    <property type="evidence" value="ECO:0007669"/>
    <property type="project" value="UniProtKB-UniRule"/>
</dbReference>
<dbReference type="GO" id="GO:0005524">
    <property type="term" value="F:ATP binding"/>
    <property type="evidence" value="ECO:0007669"/>
    <property type="project" value="UniProtKB-UniRule"/>
</dbReference>
<dbReference type="GO" id="GO:0000053">
    <property type="term" value="P:argininosuccinate metabolic process"/>
    <property type="evidence" value="ECO:0007669"/>
    <property type="project" value="TreeGrafter"/>
</dbReference>
<dbReference type="GO" id="GO:0006526">
    <property type="term" value="P:L-arginine biosynthetic process"/>
    <property type="evidence" value="ECO:0007669"/>
    <property type="project" value="UniProtKB-UniRule"/>
</dbReference>
<dbReference type="GO" id="GO:0000050">
    <property type="term" value="P:urea cycle"/>
    <property type="evidence" value="ECO:0007669"/>
    <property type="project" value="TreeGrafter"/>
</dbReference>
<dbReference type="CDD" id="cd01999">
    <property type="entry name" value="ASS"/>
    <property type="match status" value="1"/>
</dbReference>
<dbReference type="FunFam" id="1.20.5.470:FF:000002">
    <property type="entry name" value="Argininosuccinate synthase"/>
    <property type="match status" value="1"/>
</dbReference>
<dbReference type="FunFam" id="3.40.50.620:FF:000038">
    <property type="entry name" value="Argininosuccinate synthase"/>
    <property type="match status" value="1"/>
</dbReference>
<dbReference type="FunFam" id="3.90.1260.10:FF:000007">
    <property type="entry name" value="Argininosuccinate synthase"/>
    <property type="match status" value="1"/>
</dbReference>
<dbReference type="Gene3D" id="3.90.1260.10">
    <property type="entry name" value="Argininosuccinate synthetase, chain A, domain 2"/>
    <property type="match status" value="1"/>
</dbReference>
<dbReference type="Gene3D" id="3.40.50.620">
    <property type="entry name" value="HUPs"/>
    <property type="match status" value="1"/>
</dbReference>
<dbReference type="Gene3D" id="1.20.5.470">
    <property type="entry name" value="Single helix bin"/>
    <property type="match status" value="1"/>
</dbReference>
<dbReference type="HAMAP" id="MF_00005">
    <property type="entry name" value="Arg_succ_synth_type1"/>
    <property type="match status" value="1"/>
</dbReference>
<dbReference type="InterPro" id="IPR048268">
    <property type="entry name" value="Arginosuc_syn_C"/>
</dbReference>
<dbReference type="InterPro" id="IPR048267">
    <property type="entry name" value="Arginosuc_syn_N"/>
</dbReference>
<dbReference type="InterPro" id="IPR001518">
    <property type="entry name" value="Arginosuc_synth"/>
</dbReference>
<dbReference type="InterPro" id="IPR018223">
    <property type="entry name" value="Arginosuc_synth_CS"/>
</dbReference>
<dbReference type="InterPro" id="IPR023434">
    <property type="entry name" value="Arginosuc_synth_type_1_subfam"/>
</dbReference>
<dbReference type="InterPro" id="IPR024074">
    <property type="entry name" value="AS_cat/multimer_dom_body"/>
</dbReference>
<dbReference type="InterPro" id="IPR014729">
    <property type="entry name" value="Rossmann-like_a/b/a_fold"/>
</dbReference>
<dbReference type="NCBIfam" id="TIGR00032">
    <property type="entry name" value="argG"/>
    <property type="match status" value="1"/>
</dbReference>
<dbReference type="NCBIfam" id="NF001770">
    <property type="entry name" value="PRK00509.1"/>
    <property type="match status" value="1"/>
</dbReference>
<dbReference type="PANTHER" id="PTHR11587">
    <property type="entry name" value="ARGININOSUCCINATE SYNTHASE"/>
    <property type="match status" value="1"/>
</dbReference>
<dbReference type="PANTHER" id="PTHR11587:SF2">
    <property type="entry name" value="ARGININOSUCCINATE SYNTHASE"/>
    <property type="match status" value="1"/>
</dbReference>
<dbReference type="Pfam" id="PF20979">
    <property type="entry name" value="Arginosuc_syn_C"/>
    <property type="match status" value="1"/>
</dbReference>
<dbReference type="Pfam" id="PF00764">
    <property type="entry name" value="Arginosuc_synth"/>
    <property type="match status" value="1"/>
</dbReference>
<dbReference type="SUPFAM" id="SSF52402">
    <property type="entry name" value="Adenine nucleotide alpha hydrolases-like"/>
    <property type="match status" value="1"/>
</dbReference>
<dbReference type="SUPFAM" id="SSF69864">
    <property type="entry name" value="Argininosuccinate synthetase, C-terminal domain"/>
    <property type="match status" value="1"/>
</dbReference>
<dbReference type="PROSITE" id="PS00564">
    <property type="entry name" value="ARGININOSUCCIN_SYN_1"/>
    <property type="match status" value="1"/>
</dbReference>
<dbReference type="PROSITE" id="PS00565">
    <property type="entry name" value="ARGININOSUCCIN_SYN_2"/>
    <property type="match status" value="1"/>
</dbReference>
<accession>A8FG70</accession>
<sequence>MSQNKKVVLAYSGGLDTSVAVKWLQEQGYEVVACCLDVGEGKDLAFVQQKALQVGAVQSYMIDAKEEFAEEFALTALQAHTMYEGKYPLVSALSRPLIAKKLVEVAEKENAVAVAHGCTGKGNDQVRFEVSIKALNPDLEVLAPVREWKWSRDEEIDYAQKHGIPIPINLDSPYSIDQNLWGRSNECGILEDPWAAPPEGAYDLTTPLEKTPDTPEIIEITFEKGKPTAIDGIQYSLSDLILHLNEVAGQHGVGRIDHVENRLVGIKSREVYECPGAVTLLKAHKELEDLTLVKEVAHFKPIVEQKMAELIYNGLWFSPLKGALDAFLQETQQNVTGVVRVKLFKGHAIVEGRKSPYSLYDENLATYTKADEFDHDAAVGFINLWGLPTKVNSIVNKKEQVKA</sequence>
<evidence type="ECO:0000255" key="1">
    <source>
        <dbReference type="HAMAP-Rule" id="MF_00005"/>
    </source>
</evidence>
<protein>
    <recommendedName>
        <fullName evidence="1">Argininosuccinate synthase</fullName>
        <ecNumber evidence="1">6.3.4.5</ecNumber>
    </recommendedName>
    <alternativeName>
        <fullName evidence="1">Citrulline--aspartate ligase</fullName>
    </alternativeName>
</protein>
<keyword id="KW-0028">Amino-acid biosynthesis</keyword>
<keyword id="KW-0055">Arginine biosynthesis</keyword>
<keyword id="KW-0067">ATP-binding</keyword>
<keyword id="KW-0963">Cytoplasm</keyword>
<keyword id="KW-0436">Ligase</keyword>
<keyword id="KW-0547">Nucleotide-binding</keyword>